<dbReference type="EC" id="2.6.1.87" evidence="1"/>
<dbReference type="EMBL" id="CP000668">
    <property type="protein sequence ID" value="ABP39134.1"/>
    <property type="molecule type" value="Genomic_DNA"/>
</dbReference>
<dbReference type="RefSeq" id="WP_002211825.1">
    <property type="nucleotide sequence ID" value="NZ_CP009715.1"/>
</dbReference>
<dbReference type="SMR" id="A4TIM2"/>
<dbReference type="GeneID" id="57976255"/>
<dbReference type="KEGG" id="ypp:YPDSF_0728"/>
<dbReference type="PATRIC" id="fig|386656.14.peg.3141"/>
<dbReference type="UniPathway" id="UPA00030"/>
<dbReference type="UniPathway" id="UPA00032">
    <property type="reaction ID" value="UER00493"/>
</dbReference>
<dbReference type="GO" id="GO:0016020">
    <property type="term" value="C:membrane"/>
    <property type="evidence" value="ECO:0007669"/>
    <property type="project" value="GOC"/>
</dbReference>
<dbReference type="GO" id="GO:0030170">
    <property type="term" value="F:pyridoxal phosphate binding"/>
    <property type="evidence" value="ECO:0007669"/>
    <property type="project" value="TreeGrafter"/>
</dbReference>
<dbReference type="GO" id="GO:0099620">
    <property type="term" value="F:UDP-4-amino-4-deoxy-L-arabinose aminotransferase"/>
    <property type="evidence" value="ECO:0007669"/>
    <property type="project" value="UniProtKB-EC"/>
</dbReference>
<dbReference type="GO" id="GO:0009245">
    <property type="term" value="P:lipid A biosynthetic process"/>
    <property type="evidence" value="ECO:0007669"/>
    <property type="project" value="UniProtKB-KW"/>
</dbReference>
<dbReference type="GO" id="GO:0009103">
    <property type="term" value="P:lipopolysaccharide biosynthetic process"/>
    <property type="evidence" value="ECO:0007669"/>
    <property type="project" value="UniProtKB-UniRule"/>
</dbReference>
<dbReference type="GO" id="GO:0046677">
    <property type="term" value="P:response to antibiotic"/>
    <property type="evidence" value="ECO:0007669"/>
    <property type="project" value="UniProtKB-KW"/>
</dbReference>
<dbReference type="CDD" id="cd00616">
    <property type="entry name" value="AHBA_syn"/>
    <property type="match status" value="1"/>
</dbReference>
<dbReference type="FunFam" id="3.40.640.10:FF:000040">
    <property type="entry name" value="UDP-4-amino-4-deoxy-L-arabinose--oxoglutarate aminotransferase"/>
    <property type="match status" value="1"/>
</dbReference>
<dbReference type="FunFam" id="3.90.1150.10:FF:000030">
    <property type="entry name" value="UDP-4-amino-4-deoxy-L-arabinose--oxoglutarate aminotransferase"/>
    <property type="match status" value="1"/>
</dbReference>
<dbReference type="Gene3D" id="3.90.1150.10">
    <property type="entry name" value="Aspartate Aminotransferase, domain 1"/>
    <property type="match status" value="1"/>
</dbReference>
<dbReference type="Gene3D" id="3.40.640.10">
    <property type="entry name" value="Type I PLP-dependent aspartate aminotransferase-like (Major domain)"/>
    <property type="match status" value="1"/>
</dbReference>
<dbReference type="HAMAP" id="MF_01167">
    <property type="entry name" value="ArnB_transfer"/>
    <property type="match status" value="1"/>
</dbReference>
<dbReference type="InterPro" id="IPR022850">
    <property type="entry name" value="ArnB_NH2Trfase"/>
</dbReference>
<dbReference type="InterPro" id="IPR000653">
    <property type="entry name" value="DegT/StrS_aminotransferase"/>
</dbReference>
<dbReference type="InterPro" id="IPR015424">
    <property type="entry name" value="PyrdxlP-dep_Trfase"/>
</dbReference>
<dbReference type="InterPro" id="IPR015421">
    <property type="entry name" value="PyrdxlP-dep_Trfase_major"/>
</dbReference>
<dbReference type="InterPro" id="IPR015422">
    <property type="entry name" value="PyrdxlP-dep_Trfase_small"/>
</dbReference>
<dbReference type="NCBIfam" id="NF008658">
    <property type="entry name" value="PRK11658.1"/>
    <property type="match status" value="1"/>
</dbReference>
<dbReference type="PANTHER" id="PTHR30244">
    <property type="entry name" value="TRANSAMINASE"/>
    <property type="match status" value="1"/>
</dbReference>
<dbReference type="PANTHER" id="PTHR30244:SF41">
    <property type="entry name" value="UDP-4-AMINO-4-DEOXY-L-ARABINOSE--OXOGLUTARATE AMINOTRANSFERASE"/>
    <property type="match status" value="1"/>
</dbReference>
<dbReference type="Pfam" id="PF01041">
    <property type="entry name" value="DegT_DnrJ_EryC1"/>
    <property type="match status" value="1"/>
</dbReference>
<dbReference type="PIRSF" id="PIRSF000390">
    <property type="entry name" value="PLP_StrS"/>
    <property type="match status" value="1"/>
</dbReference>
<dbReference type="SUPFAM" id="SSF53383">
    <property type="entry name" value="PLP-dependent transferases"/>
    <property type="match status" value="1"/>
</dbReference>
<accession>A4TIM2</accession>
<organism>
    <name type="scientific">Yersinia pestis (strain Pestoides F)</name>
    <dbReference type="NCBI Taxonomy" id="386656"/>
    <lineage>
        <taxon>Bacteria</taxon>
        <taxon>Pseudomonadati</taxon>
        <taxon>Pseudomonadota</taxon>
        <taxon>Gammaproteobacteria</taxon>
        <taxon>Enterobacterales</taxon>
        <taxon>Yersiniaceae</taxon>
        <taxon>Yersinia</taxon>
    </lineage>
</organism>
<proteinExistence type="inferred from homology"/>
<keyword id="KW-0032">Aminotransferase</keyword>
<keyword id="KW-0046">Antibiotic resistance</keyword>
<keyword id="KW-0441">Lipid A biosynthesis</keyword>
<keyword id="KW-0444">Lipid biosynthesis</keyword>
<keyword id="KW-0443">Lipid metabolism</keyword>
<keyword id="KW-0448">Lipopolysaccharide biosynthesis</keyword>
<keyword id="KW-0663">Pyridoxal phosphate</keyword>
<keyword id="KW-0808">Transferase</keyword>
<comment type="function">
    <text evidence="1">Catalyzes the conversion of UDP-4-keto-arabinose (UDP-Ara4O) to UDP-4-amino-4-deoxy-L-arabinose (UDP-L-Ara4N). The modified arabinose is attached to lipid A and is required for resistance to polymyxin and cationic antimicrobial peptides.</text>
</comment>
<comment type="catalytic activity">
    <reaction evidence="1">
        <text>UDP-4-amino-4-deoxy-beta-L-arabinose + 2-oxoglutarate = UDP-beta-L-threo-pentopyranos-4-ulose + L-glutamate</text>
        <dbReference type="Rhea" id="RHEA:24710"/>
        <dbReference type="ChEBI" id="CHEBI:16810"/>
        <dbReference type="ChEBI" id="CHEBI:29985"/>
        <dbReference type="ChEBI" id="CHEBI:58708"/>
        <dbReference type="ChEBI" id="CHEBI:58710"/>
        <dbReference type="EC" id="2.6.1.87"/>
    </reaction>
</comment>
<comment type="cofactor">
    <cofactor evidence="1">
        <name>pyridoxal 5'-phosphate</name>
        <dbReference type="ChEBI" id="CHEBI:597326"/>
    </cofactor>
</comment>
<comment type="pathway">
    <text evidence="1">Nucleotide-sugar biosynthesis; UDP-4-deoxy-4-formamido-beta-L-arabinose biosynthesis; UDP-4-deoxy-4-formamido-beta-L-arabinose from UDP-alpha-D-glucuronate: step 2/3.</text>
</comment>
<comment type="pathway">
    <text evidence="1">Bacterial outer membrane biogenesis; lipopolysaccharide biosynthesis.</text>
</comment>
<comment type="subunit">
    <text evidence="1">Homodimer.</text>
</comment>
<comment type="similarity">
    <text evidence="1">Belongs to the DegT/DnrJ/EryC1 family. ArnB subfamily.</text>
</comment>
<protein>
    <recommendedName>
        <fullName evidence="1">UDP-4-amino-4-deoxy-L-arabinose--oxoglutarate aminotransferase</fullName>
        <ecNumber evidence="1">2.6.1.87</ecNumber>
    </recommendedName>
    <alternativeName>
        <fullName evidence="1">UDP-(beta-L-threo-pentapyranosyl-4''-ulose diphosphate) aminotransferase</fullName>
        <shortName evidence="1">UDP-Ara4O aminotransferase</shortName>
    </alternativeName>
    <alternativeName>
        <fullName evidence="1">UDP-4-amino-4-deoxy-L-arabinose aminotransferase</fullName>
    </alternativeName>
</protein>
<feature type="chain" id="PRO_1000065695" description="UDP-4-amino-4-deoxy-L-arabinose--oxoglutarate aminotransferase">
    <location>
        <begin position="1"/>
        <end position="384"/>
    </location>
</feature>
<feature type="modified residue" description="N6-(pyridoxal phosphate)lysine" evidence="1">
    <location>
        <position position="182"/>
    </location>
</feature>
<name>ARNB_YERPP</name>
<sequence length="384" mass="42246">MQSFLPFSRPAIGSEEINAVANVLGSGWITTGPQNHQLETDFCQIFGCKHAIAVCSATAGMHITLLALGIGPGDEVITPSQTWVSTINMIVLLGAEPVMVDVDRDTLMVNAAAIEAAITPNTKAIIPVHYAGAPCDLDALRQISQRHGIPLIEDAAHAVGTRYRDQWIGEQGTAIFSFHAIKNITCAEGGLVATDDDELAARVRRLKFHGLGVDAFDRQIQGRSPQAEVVEPGYKYNLSDIHAAIAVVQLRRLPEINARRQALVASYHKALAHLPLQPLALPHYSHQHAWHLFMVRVDEERCGISRDQLMACLKDMGIGSGLHFRAVHSQKYYRERYPHLCLPNTEWNSARLCTLPLFPDMLDSDIERVANALTTIIGSHRVTK</sequence>
<reference key="1">
    <citation type="submission" date="2007-02" db="EMBL/GenBank/DDBJ databases">
        <title>Complete sequence of chromosome of Yersinia pestis Pestoides F.</title>
        <authorList>
            <consortium name="US DOE Joint Genome Institute"/>
            <person name="Copeland A."/>
            <person name="Lucas S."/>
            <person name="Lapidus A."/>
            <person name="Barry K."/>
            <person name="Detter J.C."/>
            <person name="Glavina del Rio T."/>
            <person name="Hammon N."/>
            <person name="Israni S."/>
            <person name="Dalin E."/>
            <person name="Tice H."/>
            <person name="Pitluck S."/>
            <person name="Di Bartolo G."/>
            <person name="Chain P."/>
            <person name="Malfatti S."/>
            <person name="Shin M."/>
            <person name="Vergez L."/>
            <person name="Schmutz J."/>
            <person name="Larimer F."/>
            <person name="Land M."/>
            <person name="Hauser L."/>
            <person name="Worsham P."/>
            <person name="Chu M."/>
            <person name="Bearden S."/>
            <person name="Garcia E."/>
            <person name="Richardson P."/>
        </authorList>
    </citation>
    <scope>NUCLEOTIDE SEQUENCE [LARGE SCALE GENOMIC DNA]</scope>
    <source>
        <strain>Pestoides F</strain>
    </source>
</reference>
<evidence type="ECO:0000255" key="1">
    <source>
        <dbReference type="HAMAP-Rule" id="MF_01167"/>
    </source>
</evidence>
<gene>
    <name evidence="1" type="primary">arnB</name>
    <name type="ordered locus">YPDSF_0728</name>
</gene>